<gene>
    <name evidence="1" type="primary">eIF3c</name>
    <name evidence="1" type="synonym">eIF3-S8</name>
    <name type="ORF">GA18551</name>
</gene>
<feature type="chain" id="PRO_0000365391" description="Eukaryotic translation initiation factor 3 subunit C">
    <location>
        <begin position="1"/>
        <end position="911"/>
    </location>
</feature>
<feature type="domain" description="PCI" evidence="2">
    <location>
        <begin position="642"/>
        <end position="818"/>
    </location>
</feature>
<feature type="region of interest" description="Disordered" evidence="3">
    <location>
        <begin position="1"/>
        <end position="38"/>
    </location>
</feature>
<feature type="region of interest" description="Disordered" evidence="3">
    <location>
        <begin position="155"/>
        <end position="181"/>
    </location>
</feature>
<feature type="region of interest" description="Disordered" evidence="3">
    <location>
        <begin position="196"/>
        <end position="284"/>
    </location>
</feature>
<feature type="region of interest" description="Disordered" evidence="3">
    <location>
        <begin position="851"/>
        <end position="911"/>
    </location>
</feature>
<feature type="compositionally biased region" description="Acidic residues" evidence="3">
    <location>
        <begin position="11"/>
        <end position="20"/>
    </location>
</feature>
<feature type="compositionally biased region" description="Polar residues" evidence="3">
    <location>
        <begin position="23"/>
        <end position="32"/>
    </location>
</feature>
<feature type="compositionally biased region" description="Acidic residues" evidence="3">
    <location>
        <begin position="162"/>
        <end position="171"/>
    </location>
</feature>
<feature type="compositionally biased region" description="Low complexity" evidence="3">
    <location>
        <begin position="196"/>
        <end position="208"/>
    </location>
</feature>
<feature type="compositionally biased region" description="Acidic residues" evidence="3">
    <location>
        <begin position="210"/>
        <end position="236"/>
    </location>
</feature>
<feature type="compositionally biased region" description="Basic and acidic residues" evidence="3">
    <location>
        <begin position="241"/>
        <end position="271"/>
    </location>
</feature>
<feature type="compositionally biased region" description="Basic residues" evidence="3">
    <location>
        <begin position="885"/>
        <end position="896"/>
    </location>
</feature>
<feature type="compositionally biased region" description="Low complexity" evidence="3">
    <location>
        <begin position="897"/>
        <end position="911"/>
    </location>
</feature>
<feature type="modified residue" description="Phosphoserine" evidence="1">
    <location>
        <position position="34"/>
    </location>
</feature>
<feature type="modified residue" description="Phosphoserine" evidence="1">
    <location>
        <position position="165"/>
    </location>
</feature>
<feature type="modified residue" description="Phosphoserine" evidence="1">
    <location>
        <position position="175"/>
    </location>
</feature>
<feature type="modified residue" description="Phosphoserine" evidence="1">
    <location>
        <position position="184"/>
    </location>
</feature>
<accession>Q28Z41</accession>
<keyword id="KW-0963">Cytoplasm</keyword>
<keyword id="KW-0396">Initiation factor</keyword>
<keyword id="KW-0597">Phosphoprotein</keyword>
<keyword id="KW-0648">Protein biosynthesis</keyword>
<keyword id="KW-1185">Reference proteome</keyword>
<evidence type="ECO:0000255" key="1">
    <source>
        <dbReference type="HAMAP-Rule" id="MF_03002"/>
    </source>
</evidence>
<evidence type="ECO:0000255" key="2">
    <source>
        <dbReference type="PROSITE-ProRule" id="PRU01185"/>
    </source>
</evidence>
<evidence type="ECO:0000256" key="3">
    <source>
        <dbReference type="SAM" id="MobiDB-lite"/>
    </source>
</evidence>
<reference key="1">
    <citation type="journal article" date="2005" name="Genome Res.">
        <title>Comparative genome sequencing of Drosophila pseudoobscura: chromosomal, gene, and cis-element evolution.</title>
        <authorList>
            <person name="Richards S."/>
            <person name="Liu Y."/>
            <person name="Bettencourt B.R."/>
            <person name="Hradecky P."/>
            <person name="Letovsky S."/>
            <person name="Nielsen R."/>
            <person name="Thornton K."/>
            <person name="Hubisz M.J."/>
            <person name="Chen R."/>
            <person name="Meisel R.P."/>
            <person name="Couronne O."/>
            <person name="Hua S."/>
            <person name="Smith M.A."/>
            <person name="Zhang P."/>
            <person name="Liu J."/>
            <person name="Bussemaker H.J."/>
            <person name="van Batenburg M.F."/>
            <person name="Howells S.L."/>
            <person name="Scherer S.E."/>
            <person name="Sodergren E."/>
            <person name="Matthews B.B."/>
            <person name="Crosby M.A."/>
            <person name="Schroeder A.J."/>
            <person name="Ortiz-Barrientos D."/>
            <person name="Rives C.M."/>
            <person name="Metzker M.L."/>
            <person name="Muzny D.M."/>
            <person name="Scott G."/>
            <person name="Steffen D."/>
            <person name="Wheeler D.A."/>
            <person name="Worley K.C."/>
            <person name="Havlak P."/>
            <person name="Durbin K.J."/>
            <person name="Egan A."/>
            <person name="Gill R."/>
            <person name="Hume J."/>
            <person name="Morgan M.B."/>
            <person name="Miner G."/>
            <person name="Hamilton C."/>
            <person name="Huang Y."/>
            <person name="Waldron L."/>
            <person name="Verduzco D."/>
            <person name="Clerc-Blankenburg K.P."/>
            <person name="Dubchak I."/>
            <person name="Noor M.A.F."/>
            <person name="Anderson W."/>
            <person name="White K.P."/>
            <person name="Clark A.G."/>
            <person name="Schaeffer S.W."/>
            <person name="Gelbart W.M."/>
            <person name="Weinstock G.M."/>
            <person name="Gibbs R.A."/>
        </authorList>
    </citation>
    <scope>NUCLEOTIDE SEQUENCE [LARGE SCALE GENOMIC DNA]</scope>
    <source>
        <strain>MV2-25 / Tucson 14011-0121.94</strain>
    </source>
</reference>
<name>EIF3C_DROPS</name>
<protein>
    <recommendedName>
        <fullName evidence="1">Eukaryotic translation initiation factor 3 subunit C</fullName>
        <shortName evidence="1">eIF3c</shortName>
    </recommendedName>
    <alternativeName>
        <fullName evidence="1">Eukaryotic translation initiation factor 3 subunit 8</fullName>
    </alternativeName>
</protein>
<comment type="function">
    <text evidence="1">Component of the eukaryotic translation initiation factor 3 (eIF-3) complex, which is involved in protein synthesis of a specialized repertoire of mRNAs and, together with other initiation factors, stimulates binding of mRNA and methionyl-tRNAi to the 40S ribosome. The eIF-3 complex specifically targets and initiates translation of a subset of mRNAs involved in cell proliferation.</text>
</comment>
<comment type="subunit">
    <text evidence="1">Component of the eukaryotic translation initiation factor 3 (eIF-3) complex. The eIF-3 complex interacts with pix.</text>
</comment>
<comment type="subcellular location">
    <subcellularLocation>
        <location evidence="1">Cytoplasm</location>
    </subcellularLocation>
</comment>
<comment type="similarity">
    <text evidence="1">Belongs to the eIF-3 subunit C family.</text>
</comment>
<sequence length="911" mass="105941">MSRFFANGSDSESESSEEEVQAPNFNKASAFQFSDDEEEVKRVVRSTKEKRYENLTSIIKTIRNHKKIKDIPNTLSSFEDLTRAYTKALPVISKEENGITPRFYIRCLAELEDFINEIWEDREGRRNLSKNNTKSLGTLRQKVRKYIKDFEEDLSRFREAPDQESEAEDEEAHVSDAGEAADDSYAGFKKEASVTAPKIAKSAPAKSVPADDEDSDDSIDWDSDSESETESSEDENQYQNMRERFLKRSTEKGEDKGDDDKRKDKRKEQKLKIRKRAEDDEDGEWETVVKGHVVEKPKMFEKDAEIDIPLVLAKLVEIMSARGKKRTDRRLQIDLLFELRDISDQHNLGVPVSVKIHFNIISAIFDYNQKISEPMKMEHWALLLEVMQSMMKLLLANADISISESVAEEHEEYITAPYYIRGCPLAAVERLDDEFTKLLKECDPHSNDYVSRLKDEMNVVKTIELVLQYFEQCGNPNERCRIYLRKIEHLYYKFDPEVLKKKRGELPATTATSVDVMDKLCKFIYAKDDTDRIRTRAILAHIYHHAMHDNWFQARDLVLMSHLQDNIDAADPATRILYNRMMANLGLCAFRQENVKDAHHCLVDLMVTGKPKELLAQGLLPQRQHERSAEQEKIEKQRQMPFHMHINLELLECVYLVSAMLLEIPYIAAHEFDARRRMISKTFYQQLRSSERQSLVGPPESMREHVVAAAKAMRCGNWQACANFIVNKKMNTKVWDLFYESDRVREMLVKFIKEESLRTYLFTYSNVYTSISIPSLAQMYELPVPKVHSIISKMIINEELMASLDDPSETVVMHRSEPSRLQALAMQFVDKVTNLVDVNEKVFDMKQGNFFQRGNMGNRGDRGYNRNQNNQGGNWGGQRRDNRNQRNRNQRGHHKNQQQQQQQQVQTIDEE</sequence>
<dbReference type="EMBL" id="CM000071">
    <property type="protein sequence ID" value="EAL25774.1"/>
    <property type="molecule type" value="Genomic_DNA"/>
</dbReference>
<dbReference type="RefSeq" id="XP_001361196.1">
    <property type="nucleotide sequence ID" value="XM_001361159.3"/>
</dbReference>
<dbReference type="RefSeq" id="XP_015040097.1">
    <property type="nucleotide sequence ID" value="XM_015184611.1"/>
</dbReference>
<dbReference type="SMR" id="Q28Z41"/>
<dbReference type="FunCoup" id="Q28Z41">
    <property type="interactions" value="2027"/>
</dbReference>
<dbReference type="STRING" id="46245.Q28Z41"/>
<dbReference type="EnsemblMetazoa" id="FBtr0277922">
    <property type="protein sequence ID" value="FBpp0276360"/>
    <property type="gene ID" value="FBgn0078553"/>
</dbReference>
<dbReference type="EnsemblMetazoa" id="FBtr0375078">
    <property type="protein sequence ID" value="FBpp0336552"/>
    <property type="gene ID" value="FBgn0078553"/>
</dbReference>
<dbReference type="GeneID" id="4804672"/>
<dbReference type="KEGG" id="dpo:4804672"/>
<dbReference type="CTD" id="8663"/>
<dbReference type="eggNOG" id="KOG1076">
    <property type="taxonomic scope" value="Eukaryota"/>
</dbReference>
<dbReference type="HOGENOM" id="CLU_004304_0_0_1"/>
<dbReference type="InParanoid" id="Q28Z41"/>
<dbReference type="OMA" id="FRCGLIK"/>
<dbReference type="PhylomeDB" id="Q28Z41"/>
<dbReference type="ChiTaRS" id="eIF3-S8">
    <property type="organism name" value="fly"/>
</dbReference>
<dbReference type="Proteomes" id="UP000001819">
    <property type="component" value="Chromosome 3"/>
</dbReference>
<dbReference type="Bgee" id="FBgn0078553">
    <property type="expression patterns" value="Expressed in female reproductive system and 3 other cell types or tissues"/>
</dbReference>
<dbReference type="GO" id="GO:0016282">
    <property type="term" value="C:eukaryotic 43S preinitiation complex"/>
    <property type="evidence" value="ECO:0007669"/>
    <property type="project" value="UniProtKB-UniRule"/>
</dbReference>
<dbReference type="GO" id="GO:0033290">
    <property type="term" value="C:eukaryotic 48S preinitiation complex"/>
    <property type="evidence" value="ECO:0007669"/>
    <property type="project" value="UniProtKB-UniRule"/>
</dbReference>
<dbReference type="GO" id="GO:0005852">
    <property type="term" value="C:eukaryotic translation initiation factor 3 complex"/>
    <property type="evidence" value="ECO:0007669"/>
    <property type="project" value="UniProtKB-UniRule"/>
</dbReference>
<dbReference type="GO" id="GO:0003723">
    <property type="term" value="F:RNA binding"/>
    <property type="evidence" value="ECO:0007669"/>
    <property type="project" value="InterPro"/>
</dbReference>
<dbReference type="GO" id="GO:0003743">
    <property type="term" value="F:translation initiation factor activity"/>
    <property type="evidence" value="ECO:0007669"/>
    <property type="project" value="UniProtKB-UniRule"/>
</dbReference>
<dbReference type="GO" id="GO:0031369">
    <property type="term" value="F:translation initiation factor binding"/>
    <property type="evidence" value="ECO:0007669"/>
    <property type="project" value="InterPro"/>
</dbReference>
<dbReference type="GO" id="GO:0001732">
    <property type="term" value="P:formation of cytoplasmic translation initiation complex"/>
    <property type="evidence" value="ECO:0007669"/>
    <property type="project" value="UniProtKB-UniRule"/>
</dbReference>
<dbReference type="Gene3D" id="1.25.40.570">
    <property type="match status" value="1"/>
</dbReference>
<dbReference type="HAMAP" id="MF_03002">
    <property type="entry name" value="eIF3c"/>
    <property type="match status" value="1"/>
</dbReference>
<dbReference type="InterPro" id="IPR027516">
    <property type="entry name" value="EIF3C"/>
</dbReference>
<dbReference type="InterPro" id="IPR008905">
    <property type="entry name" value="EIF3C_N_dom"/>
</dbReference>
<dbReference type="InterPro" id="IPR000717">
    <property type="entry name" value="PCI_dom"/>
</dbReference>
<dbReference type="InterPro" id="IPR036390">
    <property type="entry name" value="WH_DNA-bd_sf"/>
</dbReference>
<dbReference type="PANTHER" id="PTHR13937">
    <property type="entry name" value="EUKARYOTIC TRANSLATION INITATION FACTOR 3, SUBUNIT 8 EIF3S8 -RELATED"/>
    <property type="match status" value="1"/>
</dbReference>
<dbReference type="PANTHER" id="PTHR13937:SF0">
    <property type="entry name" value="EUKARYOTIC TRANSLATION INITIATION FACTOR 3 SUBUNIT C-RELATED"/>
    <property type="match status" value="1"/>
</dbReference>
<dbReference type="Pfam" id="PF05470">
    <property type="entry name" value="eIF-3c_N"/>
    <property type="match status" value="1"/>
</dbReference>
<dbReference type="Pfam" id="PF01399">
    <property type="entry name" value="PCI"/>
    <property type="match status" value="1"/>
</dbReference>
<dbReference type="SMART" id="SM00088">
    <property type="entry name" value="PINT"/>
    <property type="match status" value="1"/>
</dbReference>
<dbReference type="SUPFAM" id="SSF46785">
    <property type="entry name" value="Winged helix' DNA-binding domain"/>
    <property type="match status" value="1"/>
</dbReference>
<dbReference type="PROSITE" id="PS50250">
    <property type="entry name" value="PCI"/>
    <property type="match status" value="1"/>
</dbReference>
<proteinExistence type="inferred from homology"/>
<organism>
    <name type="scientific">Drosophila pseudoobscura pseudoobscura</name>
    <name type="common">Fruit fly</name>
    <dbReference type="NCBI Taxonomy" id="46245"/>
    <lineage>
        <taxon>Eukaryota</taxon>
        <taxon>Metazoa</taxon>
        <taxon>Ecdysozoa</taxon>
        <taxon>Arthropoda</taxon>
        <taxon>Hexapoda</taxon>
        <taxon>Insecta</taxon>
        <taxon>Pterygota</taxon>
        <taxon>Neoptera</taxon>
        <taxon>Endopterygota</taxon>
        <taxon>Diptera</taxon>
        <taxon>Brachycera</taxon>
        <taxon>Muscomorpha</taxon>
        <taxon>Ephydroidea</taxon>
        <taxon>Drosophilidae</taxon>
        <taxon>Drosophila</taxon>
        <taxon>Sophophora</taxon>
    </lineage>
</organism>